<dbReference type="PDB" id="3UJO">
    <property type="method" value="X-ray"/>
    <property type="resolution" value="2.00 A"/>
    <property type="chains" value="A/B/C/D=1-281"/>
</dbReference>
<dbReference type="PDB" id="3UJQ">
    <property type="method" value="X-ray"/>
    <property type="resolution" value="2.06 A"/>
    <property type="chains" value="A/B/C/D=1-281"/>
</dbReference>
<dbReference type="PDB" id="3UK9">
    <property type="method" value="X-ray"/>
    <property type="resolution" value="3.11 A"/>
    <property type="chains" value="A/B/C/D/E/F/G/H=1-281"/>
</dbReference>
<dbReference type="PDB" id="3UL2">
    <property type="method" value="X-ray"/>
    <property type="resolution" value="2.50 A"/>
    <property type="chains" value="A/B/C/D=1-281"/>
</dbReference>
<dbReference type="PDBsum" id="3UJO"/>
<dbReference type="PDBsum" id="3UJQ"/>
<dbReference type="PDBsum" id="3UK9"/>
<dbReference type="PDBsum" id="3UL2"/>
<dbReference type="SMR" id="B3EWQ9"/>
<dbReference type="UniLectin" id="B3EWQ9"/>
<dbReference type="EvolutionaryTrace" id="B3EWQ9"/>
<dbReference type="GO" id="GO:0030246">
    <property type="term" value="F:carbohydrate binding"/>
    <property type="evidence" value="ECO:0007669"/>
    <property type="project" value="UniProtKB-KW"/>
</dbReference>
<dbReference type="GO" id="GO:0042742">
    <property type="term" value="P:defense response to bacterium"/>
    <property type="evidence" value="ECO:0007669"/>
    <property type="project" value="UniProtKB-KW"/>
</dbReference>
<dbReference type="GO" id="GO:0050832">
    <property type="term" value="P:defense response to fungus"/>
    <property type="evidence" value="ECO:0007669"/>
    <property type="project" value="UniProtKB-KW"/>
</dbReference>
<dbReference type="GO" id="GO:0031640">
    <property type="term" value="P:killing of cells of another organism"/>
    <property type="evidence" value="ECO:0007669"/>
    <property type="project" value="UniProtKB-KW"/>
</dbReference>
<dbReference type="CDD" id="cd06899">
    <property type="entry name" value="lectin_legume_LecRK_Arcelin_ConA"/>
    <property type="match status" value="1"/>
</dbReference>
<dbReference type="Gene3D" id="2.60.120.200">
    <property type="match status" value="1"/>
</dbReference>
<dbReference type="InterPro" id="IPR013320">
    <property type="entry name" value="ConA-like_dom_sf"/>
</dbReference>
<dbReference type="InterPro" id="IPR016363">
    <property type="entry name" value="L-lectin"/>
</dbReference>
<dbReference type="InterPro" id="IPR000985">
    <property type="entry name" value="Lectin_LegA_CS"/>
</dbReference>
<dbReference type="InterPro" id="IPR019825">
    <property type="entry name" value="Lectin_legB_Mn/Ca_BS"/>
</dbReference>
<dbReference type="InterPro" id="IPR001220">
    <property type="entry name" value="Legume_lectin_dom"/>
</dbReference>
<dbReference type="InterPro" id="IPR050258">
    <property type="entry name" value="Leguminous_Lectin"/>
</dbReference>
<dbReference type="PANTHER" id="PTHR32401">
    <property type="entry name" value="CONCANAVALIN A-LIKE LECTIN FAMILY PROTEIN"/>
    <property type="match status" value="1"/>
</dbReference>
<dbReference type="PANTHER" id="PTHR32401:SF45">
    <property type="entry name" value="LECTIN"/>
    <property type="match status" value="1"/>
</dbReference>
<dbReference type="Pfam" id="PF00139">
    <property type="entry name" value="Lectin_legB"/>
    <property type="match status" value="1"/>
</dbReference>
<dbReference type="PIRSF" id="PIRSF002690">
    <property type="entry name" value="L-type_lectin_plant"/>
    <property type="match status" value="1"/>
</dbReference>
<dbReference type="SUPFAM" id="SSF49899">
    <property type="entry name" value="Concanavalin A-like lectins/glucanases"/>
    <property type="match status" value="1"/>
</dbReference>
<dbReference type="PROSITE" id="PS00308">
    <property type="entry name" value="LECTIN_LEGUME_ALPHA"/>
    <property type="match status" value="1"/>
</dbReference>
<dbReference type="PROSITE" id="PS00307">
    <property type="entry name" value="LECTIN_LEGUME_BETA"/>
    <property type="match status" value="1"/>
</dbReference>
<protein>
    <recommendedName>
        <fullName evidence="5">Lectin alpha chain</fullName>
    </recommendedName>
    <alternativeName>
        <fullName evidence="5">DLL-II</fullName>
    </alternativeName>
    <component>
        <recommendedName>
            <fullName evidence="5">Lectin beta chain</fullName>
        </recommendedName>
    </component>
</protein>
<sequence>NNLISFTMKRIVLFLILLTKAASANLISFTFKRFNETNLILQRDATVSSGKLRITKAAENGVPTAGSLGRAFYSTPIQIWDNTTGTVAAWATSFTFNLQAPNAASPADGLAFALVPVGSQPKDKGGFLGLFDSKNYASSNQTVAVEFDTFYNGGWDPTERHIGIDVNSIKSIKTTSWDFANGENAEVLITYDSSTNLLVASLVHPSQKTSFIVSERVDLTSVLPEWVSVGFSATTGLSKGYVETNEVLSWSFASKISINKEDEENKLLISNLEGKAINNLA</sequence>
<name>LECA2_LABPU</name>
<comment type="function">
    <text evidence="2">D-galactose-binding lectin.</text>
</comment>
<comment type="biophysicochemical properties">
    <phDependence>
        <text evidence="2">Optimum pH is 7.4. No activity between pH 4.0 and pH 6.0, 80% activity at pH 8.0 and 20% activity at pH 9.0.</text>
    </phDependence>
    <temperatureDependence>
        <text evidence="2">Activity stable between 4 and 40 degrees Celsius, declines at higher temperatures and is lost at 90 degrees Celsius.</text>
    </temperatureDependence>
</comment>
<comment type="subunit">
    <text evidence="2 3 4">Tetramer of 2 alpha and 2 beta chains.</text>
</comment>
<comment type="PTM">
    <text evidence="2">Glycosylated.</text>
</comment>
<comment type="PTM">
    <text evidence="5">The beta chain is produced by partial proteolytic processing of the alpha chain.</text>
</comment>
<comment type="mass spectrometry">
    <molecule>Lectin alpha chain</molecule>
    <text>Alpha chain.</text>
</comment>
<comment type="mass spectrometry">
    <molecule>Lectin beta chain</molecule>
    <text>Beta chain.</text>
</comment>
<comment type="similarity">
    <text evidence="1">Belongs to the leguminous lectin family.</text>
</comment>
<proteinExistence type="evidence at protein level"/>
<keyword id="KW-0002">3D-structure</keyword>
<keyword id="KW-0044">Antibiotic</keyword>
<keyword id="KW-0929">Antimicrobial</keyword>
<keyword id="KW-0903">Direct protein sequencing</keyword>
<keyword id="KW-0295">Fungicide</keyword>
<keyword id="KW-0325">Glycoprotein</keyword>
<keyword id="KW-0430">Lectin</keyword>
<reference evidence="6" key="1">
    <citation type="journal article" date="2009" name="Glycoconj. J.">
        <title>Complete primary structure of a newly characterized galactose-specific lectin from the seeds of Dolichos lablab.</title>
        <authorList>
            <person name="Rameshwaram N.R."/>
            <person name="Karanam N.K."/>
            <person name="Scharf C."/>
            <person name="Volker U."/>
            <person name="Nadimpalli S.K."/>
        </authorList>
    </citation>
    <scope>PROTEIN SEQUENCE</scope>
    <scope>SUBUNIT</scope>
    <scope>MASS SPECTROMETRY</scope>
    <source>
        <tissue evidence="4">Seed</tissue>
    </source>
</reference>
<reference evidence="6" key="2">
    <citation type="journal article" date="2006" name="Protein Expr. Purif.">
        <title>Affinity purification, physicochemical and immunological characterization of a galactose-specific lectin from the seeds of Dolichos lablab (Indian lablab beans).</title>
        <authorList>
            <person name="Latha V.L."/>
            <person name="Rao R.N."/>
            <person name="Nadimpalli S.K."/>
        </authorList>
    </citation>
    <scope>PROTEIN SEQUENCE OF 1-10</scope>
    <scope>FUNCTION</scope>
    <scope>BIOPHYSICOCHEMICAL PROPERTIES</scope>
    <scope>SUBUNIT</scope>
    <scope>GLYCOSYLATION</scope>
    <source>
        <tissue evidence="2">Seed</tissue>
    </source>
</reference>
<reference evidence="6" key="3">
    <citation type="journal article" date="2006" name="Acta Crystallogr. F">
        <title>Crystallization and preliminary X-ray crystallographic analysis of a galactose-specific lectin from Dolichos lablab.</title>
        <authorList>
            <person name="Latha V.L."/>
            <person name="Kulkarni K.A."/>
            <person name="Rao R.N."/>
            <person name="Kumar N.S."/>
            <person name="Suguna K."/>
        </authorList>
    </citation>
    <scope>CRYSTALLIZATION</scope>
    <scope>PRELIMINARY X-RAY CRYSTALLOGRAPHY (3.0 ANGSTROMS)</scope>
    <scope>SUBUNIT</scope>
    <source>
        <tissue evidence="3">Seed</tissue>
    </source>
</reference>
<feature type="chain" id="PRO_0000420130" description="Lectin alpha chain">
    <location>
        <begin position="1"/>
        <end position="281"/>
    </location>
</feature>
<feature type="chain" id="PRO_0000420131" description="Lectin beta chain" evidence="4">
    <location>
        <begin position="1"/>
        <end position="263"/>
    </location>
</feature>
<feature type="site" description="Cleavage" evidence="4">
    <location>
        <begin position="263"/>
        <end position="264"/>
    </location>
</feature>
<feature type="glycosylation site" description="N-linked (GlcNAc...) asparagine" evidence="1">
    <location>
        <position position="35"/>
    </location>
</feature>
<feature type="glycosylation site" description="N-linked (GlcNAc...) asparagine" evidence="1">
    <location>
        <position position="82"/>
    </location>
</feature>
<feature type="glycosylation site" description="N-linked (GlcNAc...) asparagine" evidence="1">
    <location>
        <position position="140"/>
    </location>
</feature>
<feature type="strand" evidence="7">
    <location>
        <begin position="25"/>
        <end position="33"/>
    </location>
</feature>
<feature type="strand" evidence="7">
    <location>
        <begin position="39"/>
        <end position="41"/>
    </location>
</feature>
<feature type="strand" evidence="7">
    <location>
        <begin position="51"/>
        <end position="53"/>
    </location>
</feature>
<feature type="strand" evidence="7">
    <location>
        <begin position="68"/>
        <end position="75"/>
    </location>
</feature>
<feature type="strand" evidence="7">
    <location>
        <begin position="82"/>
        <end position="84"/>
    </location>
</feature>
<feature type="strand" evidence="7">
    <location>
        <begin position="87"/>
        <end position="97"/>
    </location>
</feature>
<feature type="strand" evidence="7">
    <location>
        <begin position="108"/>
        <end position="116"/>
    </location>
</feature>
<feature type="helix" evidence="7">
    <location>
        <begin position="125"/>
        <end position="127"/>
    </location>
</feature>
<feature type="turn" evidence="7">
    <location>
        <begin position="128"/>
        <end position="130"/>
    </location>
</feature>
<feature type="strand" evidence="7">
    <location>
        <begin position="143"/>
        <end position="147"/>
    </location>
</feature>
<feature type="strand" evidence="8">
    <location>
        <begin position="154"/>
        <end position="156"/>
    </location>
</feature>
<feature type="strand" evidence="7">
    <location>
        <begin position="158"/>
        <end position="169"/>
    </location>
</feature>
<feature type="strand" evidence="7">
    <location>
        <begin position="174"/>
        <end position="176"/>
    </location>
</feature>
<feature type="strand" evidence="7">
    <location>
        <begin position="185"/>
        <end position="191"/>
    </location>
</feature>
<feature type="turn" evidence="7">
    <location>
        <begin position="193"/>
        <end position="195"/>
    </location>
</feature>
<feature type="strand" evidence="7">
    <location>
        <begin position="197"/>
        <end position="203"/>
    </location>
</feature>
<feature type="turn" evidence="7">
    <location>
        <begin position="205"/>
        <end position="207"/>
    </location>
</feature>
<feature type="strand" evidence="7">
    <location>
        <begin position="211"/>
        <end position="216"/>
    </location>
</feature>
<feature type="turn" evidence="7">
    <location>
        <begin position="220"/>
        <end position="222"/>
    </location>
</feature>
<feature type="strand" evidence="7">
    <location>
        <begin position="225"/>
        <end position="235"/>
    </location>
</feature>
<feature type="strand" evidence="8">
    <location>
        <begin position="237"/>
        <end position="241"/>
    </location>
</feature>
<feature type="strand" evidence="7">
    <location>
        <begin position="246"/>
        <end position="256"/>
    </location>
</feature>
<feature type="strand" evidence="7">
    <location>
        <begin position="258"/>
        <end position="260"/>
    </location>
</feature>
<feature type="strand" evidence="7">
    <location>
        <begin position="264"/>
        <end position="267"/>
    </location>
</feature>
<feature type="strand" evidence="7">
    <location>
        <begin position="270"/>
        <end position="272"/>
    </location>
</feature>
<feature type="turn" evidence="7">
    <location>
        <begin position="273"/>
        <end position="275"/>
    </location>
</feature>
<organism>
    <name type="scientific">Lablab purpureus</name>
    <name type="common">Hyacinth bean</name>
    <name type="synonym">Dolichos lablab</name>
    <dbReference type="NCBI Taxonomy" id="35936"/>
    <lineage>
        <taxon>Eukaryota</taxon>
        <taxon>Viridiplantae</taxon>
        <taxon>Streptophyta</taxon>
        <taxon>Embryophyta</taxon>
        <taxon>Tracheophyta</taxon>
        <taxon>Spermatophyta</taxon>
        <taxon>Magnoliopsida</taxon>
        <taxon>eudicotyledons</taxon>
        <taxon>Gunneridae</taxon>
        <taxon>Pentapetalae</taxon>
        <taxon>rosids</taxon>
        <taxon>fabids</taxon>
        <taxon>Fabales</taxon>
        <taxon>Fabaceae</taxon>
        <taxon>Papilionoideae</taxon>
        <taxon>50 kb inversion clade</taxon>
        <taxon>NPAAA clade</taxon>
        <taxon>indigoferoid/millettioid clade</taxon>
        <taxon>Phaseoleae</taxon>
        <taxon>Lablab</taxon>
    </lineage>
</organism>
<accession>B3EWQ9</accession>
<evidence type="ECO:0000255" key="1"/>
<evidence type="ECO:0000269" key="2">
    <source>
    </source>
</evidence>
<evidence type="ECO:0000269" key="3">
    <source>
    </source>
</evidence>
<evidence type="ECO:0000269" key="4">
    <source>
    </source>
</evidence>
<evidence type="ECO:0000303" key="5">
    <source>
    </source>
</evidence>
<evidence type="ECO:0000305" key="6"/>
<evidence type="ECO:0007829" key="7">
    <source>
        <dbReference type="PDB" id="3UJO"/>
    </source>
</evidence>
<evidence type="ECO:0007829" key="8">
    <source>
        <dbReference type="PDB" id="3UJQ"/>
    </source>
</evidence>